<name>GATY_ECOLI</name>
<keyword id="KW-0903">Direct protein sequencing</keyword>
<keyword id="KW-0298">Galactitol metabolism</keyword>
<keyword id="KW-0456">Lyase</keyword>
<keyword id="KW-0479">Metal-binding</keyword>
<keyword id="KW-1185">Reference proteome</keyword>
<keyword id="KW-0862">Zinc</keyword>
<dbReference type="EC" id="4.1.2.40" evidence="3 8"/>
<dbReference type="EMBL" id="U00096">
    <property type="protein sequence ID" value="AAC75157.2"/>
    <property type="molecule type" value="Genomic_DNA"/>
</dbReference>
<dbReference type="EMBL" id="AP009048">
    <property type="protein sequence ID" value="BAA15966.2"/>
    <property type="molecule type" value="Genomic_DNA"/>
</dbReference>
<dbReference type="PIR" id="S55901">
    <property type="entry name" value="S55901"/>
</dbReference>
<dbReference type="RefSeq" id="NP_416599.2">
    <property type="nucleotide sequence ID" value="NC_000913.3"/>
</dbReference>
<dbReference type="RefSeq" id="WP_001307281.1">
    <property type="nucleotide sequence ID" value="NZ_SSZK01000011.1"/>
</dbReference>
<dbReference type="SMR" id="P0C8J6"/>
<dbReference type="BioGRID" id="4260432">
    <property type="interactions" value="19"/>
</dbReference>
<dbReference type="ComplexPortal" id="CPX-6023">
    <property type="entry name" value="GatYZ tagatose-1,6-bisphosphate aldolase complex"/>
</dbReference>
<dbReference type="DIP" id="DIP-48239N"/>
<dbReference type="FunCoup" id="P0C8J6">
    <property type="interactions" value="401"/>
</dbReference>
<dbReference type="IntAct" id="P0C8J6">
    <property type="interactions" value="14"/>
</dbReference>
<dbReference type="STRING" id="511145.b2096"/>
<dbReference type="jPOST" id="P0C8J6"/>
<dbReference type="PaxDb" id="511145-b2096"/>
<dbReference type="EnsemblBacteria" id="AAC75157">
    <property type="protein sequence ID" value="AAC75157"/>
    <property type="gene ID" value="b2096"/>
</dbReference>
<dbReference type="GeneID" id="946636"/>
<dbReference type="KEGG" id="ecj:JW5343"/>
<dbReference type="KEGG" id="eco:b2096"/>
<dbReference type="KEGG" id="ecoc:C3026_11765"/>
<dbReference type="PATRIC" id="fig|1411691.4.peg.151"/>
<dbReference type="EchoBASE" id="EB2318"/>
<dbReference type="eggNOG" id="COG0191">
    <property type="taxonomic scope" value="Bacteria"/>
</dbReference>
<dbReference type="HOGENOM" id="CLU_040088_0_1_6"/>
<dbReference type="InParanoid" id="P0C8J6"/>
<dbReference type="OMA" id="TCYSAIR"/>
<dbReference type="OrthoDB" id="9803995at2"/>
<dbReference type="PhylomeDB" id="P0C8J6"/>
<dbReference type="BioCyc" id="EcoCyc:TAGAALDOL2-MONOMER"/>
<dbReference type="BioCyc" id="MetaCyc:TAGAALDOL2-MONOMER"/>
<dbReference type="SABIO-RK" id="P0C8J6"/>
<dbReference type="UniPathway" id="UPA00704">
    <property type="reaction ID" value="UER00716"/>
</dbReference>
<dbReference type="PRO" id="PR:P0C8J6"/>
<dbReference type="Proteomes" id="UP000000625">
    <property type="component" value="Chromosome"/>
</dbReference>
<dbReference type="GO" id="GO:1902494">
    <property type="term" value="C:catalytic complex"/>
    <property type="evidence" value="ECO:0000303"/>
    <property type="project" value="ComplexPortal"/>
</dbReference>
<dbReference type="GO" id="GO:0005829">
    <property type="term" value="C:cytosol"/>
    <property type="evidence" value="ECO:0000318"/>
    <property type="project" value="GO_Central"/>
</dbReference>
<dbReference type="GO" id="GO:0009025">
    <property type="term" value="F:tagatose-bisphosphate aldolase activity"/>
    <property type="evidence" value="ECO:0000314"/>
    <property type="project" value="EcoCyc"/>
</dbReference>
<dbReference type="GO" id="GO:0008270">
    <property type="term" value="F:zinc ion binding"/>
    <property type="evidence" value="ECO:0007669"/>
    <property type="project" value="UniProtKB-UniRule"/>
</dbReference>
<dbReference type="GO" id="GO:2001059">
    <property type="term" value="P:D-tagatose 6-phosphate catabolic process"/>
    <property type="evidence" value="ECO:0000303"/>
    <property type="project" value="ComplexPortal"/>
</dbReference>
<dbReference type="GO" id="GO:0019404">
    <property type="term" value="P:galactitol catabolic process"/>
    <property type="evidence" value="ECO:0000269"/>
    <property type="project" value="EcoCyc"/>
</dbReference>
<dbReference type="CDD" id="cd00947">
    <property type="entry name" value="TBP_aldolase_IIB"/>
    <property type="match status" value="1"/>
</dbReference>
<dbReference type="FunFam" id="3.20.20.70:FF:000043">
    <property type="entry name" value="D-tagatose-1,6-bisphosphate aldolase subunit GatY"/>
    <property type="match status" value="1"/>
</dbReference>
<dbReference type="Gene3D" id="3.20.20.70">
    <property type="entry name" value="Aldolase class I"/>
    <property type="match status" value="1"/>
</dbReference>
<dbReference type="HAMAP" id="MF_01294">
    <property type="entry name" value="TagBP_aldolase_GatY"/>
    <property type="match status" value="1"/>
</dbReference>
<dbReference type="InterPro" id="IPR013785">
    <property type="entry name" value="Aldolase_TIM"/>
</dbReference>
<dbReference type="InterPro" id="IPR050246">
    <property type="entry name" value="Class_II_FBP_aldolase"/>
</dbReference>
<dbReference type="InterPro" id="IPR000771">
    <property type="entry name" value="FBA_II"/>
</dbReference>
<dbReference type="InterPro" id="IPR011288">
    <property type="entry name" value="TagBP_ald_KbaY/GatY"/>
</dbReference>
<dbReference type="InterPro" id="IPR023955">
    <property type="entry name" value="TagBP_aldolase_GatY"/>
</dbReference>
<dbReference type="NCBIfam" id="TIGR00167">
    <property type="entry name" value="cbbA"/>
    <property type="match status" value="1"/>
</dbReference>
<dbReference type="NCBIfam" id="NF006626">
    <property type="entry name" value="PRK09195.1"/>
    <property type="match status" value="1"/>
</dbReference>
<dbReference type="NCBIfam" id="NF009374">
    <property type="entry name" value="PRK12737.1"/>
    <property type="match status" value="1"/>
</dbReference>
<dbReference type="NCBIfam" id="TIGR01858">
    <property type="entry name" value="tag_bisphos_ald"/>
    <property type="match status" value="1"/>
</dbReference>
<dbReference type="PANTHER" id="PTHR30304">
    <property type="entry name" value="D-TAGATOSE-1,6-BISPHOSPHATE ALDOLASE"/>
    <property type="match status" value="1"/>
</dbReference>
<dbReference type="PANTHER" id="PTHR30304:SF0">
    <property type="entry name" value="D-TAGATOSE-1,6-BISPHOSPHATE ALDOLASE SUBUNIT GATY-RELATED"/>
    <property type="match status" value="1"/>
</dbReference>
<dbReference type="Pfam" id="PF01116">
    <property type="entry name" value="F_bP_aldolase"/>
    <property type="match status" value="1"/>
</dbReference>
<dbReference type="PIRSF" id="PIRSF001359">
    <property type="entry name" value="F_bP_aldolase_II"/>
    <property type="match status" value="1"/>
</dbReference>
<dbReference type="SUPFAM" id="SSF51569">
    <property type="entry name" value="Aldolase"/>
    <property type="match status" value="1"/>
</dbReference>
<dbReference type="PROSITE" id="PS00602">
    <property type="entry name" value="ALDOLASE_CLASS_II_1"/>
    <property type="match status" value="1"/>
</dbReference>
<dbReference type="PROSITE" id="PS00806">
    <property type="entry name" value="ALDOLASE_CLASS_II_2"/>
    <property type="match status" value="1"/>
</dbReference>
<organism>
    <name type="scientific">Escherichia coli (strain K12)</name>
    <dbReference type="NCBI Taxonomy" id="83333"/>
    <lineage>
        <taxon>Bacteria</taxon>
        <taxon>Pseudomonadati</taxon>
        <taxon>Pseudomonadota</taxon>
        <taxon>Gammaproteobacteria</taxon>
        <taxon>Enterobacterales</taxon>
        <taxon>Enterobacteriaceae</taxon>
        <taxon>Escherichia</taxon>
    </lineage>
</organism>
<proteinExistence type="evidence at protein level"/>
<reference key="1">
    <citation type="journal article" date="1996" name="DNA Res.">
        <title>A 460-kb DNA sequence of the Escherichia coli K-12 genome corresponding to the 40.1-50.0 min region on the linkage map.</title>
        <authorList>
            <person name="Itoh T."/>
            <person name="Aiba H."/>
            <person name="Baba T."/>
            <person name="Fujita K."/>
            <person name="Hayashi K."/>
            <person name="Inada T."/>
            <person name="Isono K."/>
            <person name="Kasai H."/>
            <person name="Kimura S."/>
            <person name="Kitakawa M."/>
            <person name="Kitagawa M."/>
            <person name="Makino K."/>
            <person name="Miki T."/>
            <person name="Mizobuchi K."/>
            <person name="Mori H."/>
            <person name="Mori T."/>
            <person name="Motomura K."/>
            <person name="Nakade S."/>
            <person name="Nakamura Y."/>
            <person name="Nashimoto H."/>
            <person name="Nishio Y."/>
            <person name="Oshima T."/>
            <person name="Saito N."/>
            <person name="Sampei G."/>
            <person name="Seki Y."/>
            <person name="Sivasundaram S."/>
            <person name="Tagami H."/>
            <person name="Takeda J."/>
            <person name="Takemoto K."/>
            <person name="Wada C."/>
            <person name="Yamamoto Y."/>
            <person name="Horiuchi T."/>
        </authorList>
    </citation>
    <scope>NUCLEOTIDE SEQUENCE [LARGE SCALE GENOMIC DNA]</scope>
    <source>
        <strain>K12 / W3110 / ATCC 27325 / DSM 5911</strain>
    </source>
</reference>
<reference key="2">
    <citation type="journal article" date="1997" name="Science">
        <title>The complete genome sequence of Escherichia coli K-12.</title>
        <authorList>
            <person name="Blattner F.R."/>
            <person name="Plunkett G. III"/>
            <person name="Bloch C.A."/>
            <person name="Perna N.T."/>
            <person name="Burland V."/>
            <person name="Riley M."/>
            <person name="Collado-Vides J."/>
            <person name="Glasner J.D."/>
            <person name="Rode C.K."/>
            <person name="Mayhew G.F."/>
            <person name="Gregor J."/>
            <person name="Davis N.W."/>
            <person name="Kirkpatrick H.A."/>
            <person name="Goeden M.A."/>
            <person name="Rose D.J."/>
            <person name="Mau B."/>
            <person name="Shao Y."/>
        </authorList>
    </citation>
    <scope>NUCLEOTIDE SEQUENCE [LARGE SCALE GENOMIC DNA]</scope>
    <source>
        <strain>K12 / MG1655 / ATCC 47076</strain>
    </source>
</reference>
<reference key="3">
    <citation type="journal article" date="2006" name="Mol. Syst. Biol.">
        <title>Highly accurate genome sequences of Escherichia coli K-12 strains MG1655 and W3110.</title>
        <authorList>
            <person name="Hayashi K."/>
            <person name="Morooka N."/>
            <person name="Yamamoto Y."/>
            <person name="Fujita K."/>
            <person name="Isono K."/>
            <person name="Choi S."/>
            <person name="Ohtsubo E."/>
            <person name="Baba T."/>
            <person name="Wanner B.L."/>
            <person name="Mori H."/>
            <person name="Horiuchi T."/>
        </authorList>
    </citation>
    <scope>NUCLEOTIDE SEQUENCE [LARGE SCALE GENOMIC DNA]</scope>
    <source>
        <strain>K12 / W3110 / ATCC 27325 / DSM 5911</strain>
    </source>
</reference>
<reference key="4">
    <citation type="journal article" date="1999" name="J. Bacteriol.">
        <title>Acid- and base-induced proteins during aerobic and anaerobic growth of Escherichia coli revealed by two-dimensional gel electrophoresis.</title>
        <authorList>
            <person name="Blankenhorn D."/>
            <person name="Phillips J."/>
            <person name="Slonczewski J.L."/>
        </authorList>
    </citation>
    <scope>PROTEIN SEQUENCE OF 1-12</scope>
    <scope>INDUCTION AT LOW PH</scope>
    <source>
        <strain>K12 / W3110 / ATCC 27325 / DSM 5911</strain>
    </source>
</reference>
<reference key="5">
    <citation type="journal article" date="2007" name="Genes Genet. Syst.">
        <title>A role of RnlA in the RNase LS activity from Escherichia coli.</title>
        <authorList>
            <person name="Otsuka Y."/>
            <person name="Koga M."/>
            <person name="Iwamoto A."/>
            <person name="Yonesaki T."/>
        </authorList>
    </citation>
    <scope>PROTEIN SEQUENCE OF 1-8</scope>
    <source>
        <strain>K12</strain>
    </source>
</reference>
<reference key="6">
    <citation type="journal article" date="1996" name="J. Bacteriol.">
        <title>Molecular analysis of the gat genes from Escherichia coli and of their roles in galactitol transport and metabolism.</title>
        <authorList>
            <person name="Nobelmann B."/>
            <person name="Lengeler J.W."/>
        </authorList>
    </citation>
    <scope>FUNCTION</scope>
    <scope>ROLE IN GALACTITOL CATABOLISM</scope>
    <scope>INDUCTION</scope>
    <scope>CATALYTIC ACTIVITY</scope>
    <source>
        <strain>K12</strain>
    </source>
</reference>
<reference key="7">
    <citation type="journal article" date="2002" name="Arch. Microbiol.">
        <title>Two class II D-tagatose-bisphosphate aldolases from enteric bacteria.</title>
        <authorList>
            <person name="Brinkkoetter A."/>
            <person name="Shakeri-Garakani A."/>
            <person name="Lengeler J.W."/>
        </authorList>
    </citation>
    <scope>FUNCTION</scope>
    <scope>COMPLEX WITH GATZ</scope>
    <scope>BIOPHYSICOCHEMICAL PROPERTIES</scope>
    <scope>SUBUNIT</scope>
    <scope>CATALYTIC ACTIVITY</scope>
    <source>
        <strain>K12</strain>
    </source>
</reference>
<sequence length="284" mass="30812">MYVVSTKQMLNNAQRGGYAVPAFNIHNLETMQVVVETAANLHAPVIIAGTPGTFTHAGTENLLALVSAMAKQYHHPLAIHLDHHTKFDDIAQKVRSGVRSVMIDASHLPFAQNISRVKEVVDFCHRFDVSVEAELGQLGGQEDDVQVNEADALYTNPAQAREFAEATGIDSLAVAIGTAHGMYASAPALDFSRLENIRQWVNLPLVLHGASGLSTKDIQQTIKLGICKINVATELKNAFSQALKNYLTEHPEATDPRDYLQSAKSAMRDVVSKVIADCGCEGRA</sequence>
<protein>
    <recommendedName>
        <fullName evidence="5">D-tagatose-1,6-bisphosphate aldolase subunit GatY</fullName>
        <shortName>TBPA</shortName>
        <shortName>TagBP aldolase</shortName>
        <ecNumber evidence="3 8">4.1.2.40</ecNumber>
    </recommendedName>
    <alternativeName>
        <fullName>D-tagatose-bisphosphate aldolase class II</fullName>
    </alternativeName>
    <alternativeName>
        <fullName>Tagatose-bisphosphate aldolase</fullName>
    </alternativeName>
</protein>
<comment type="function">
    <text evidence="3 4">Catalytic subunit of the tagatose-1,6-bisphosphate aldolase GatYZ, which catalyzes the reversible aldol condensation of dihydroxyacetone phosphate (DHAP or glycerone-phosphate) with glyceraldehyde 3-phosphate (G3P) to produce tagatose 1,6-bisphosphate (TBP) (PubMed:11976750, PubMed:8955298). Requires GatZ subunit for full activity and stability (PubMed:11976750). Is involved in the catabolism of galactitol (PubMed:11976750, PubMed:8955298). Has a high aldolase activity for TBP and a very low one for fructose 1,6-bisphosphate (FBP) (PubMed:11976750).</text>
</comment>
<comment type="catalytic activity">
    <reaction evidence="3 8">
        <text>D-tagatofuranose 1,6-bisphosphate = D-glyceraldehyde 3-phosphate + dihydroxyacetone phosphate</text>
        <dbReference type="Rhea" id="RHEA:22948"/>
        <dbReference type="ChEBI" id="CHEBI:57642"/>
        <dbReference type="ChEBI" id="CHEBI:58694"/>
        <dbReference type="ChEBI" id="CHEBI:59776"/>
        <dbReference type="EC" id="4.1.2.40"/>
    </reaction>
    <physiologicalReaction direction="left-to-right" evidence="3">
        <dbReference type="Rhea" id="RHEA:22949"/>
    </physiologicalReaction>
    <physiologicalReaction direction="right-to-left" evidence="3">
        <dbReference type="Rhea" id="RHEA:22950"/>
    </physiologicalReaction>
</comment>
<comment type="cofactor">
    <cofactor evidence="1">
        <name>Zn(2+)</name>
        <dbReference type="ChEBI" id="CHEBI:29105"/>
    </cofactor>
    <text evidence="1">Binds 1 zinc ion per subunit.</text>
</comment>
<comment type="biophysicochemical properties">
    <kinetics>
        <KM evidence="3">1 mM for tagatose-1,6-bisphosphate (when expressed alone)</KM>
        <KM evidence="3">0.3 mM for tagatose-1,6-bisphosphate (when expressed with GatZ)</KM>
    </kinetics>
</comment>
<comment type="pathway">
    <text>Carbohydrate metabolism; D-tagatose 6-phosphate degradation; D-glyceraldehyde 3-phosphate and glycerone phosphate from D-tagatose 6-phosphate: step 2/2.</text>
</comment>
<comment type="subunit">
    <text evidence="7">Forms a complex with GatZ.</text>
</comment>
<comment type="induction">
    <text evidence="2 4">Constitutively expressed. Up-regulated under low pH conditions.</text>
</comment>
<comment type="similarity">
    <text evidence="6">Belongs to the class II fructose-bisphosphate aldolase family. TagBP aldolase GatY subfamily.</text>
</comment>
<accession>P0C8J6</accession>
<accession>P37192</accession>
<accession>P76415</accession>
<feature type="chain" id="PRO_0000178766" description="D-tagatose-1,6-bisphosphate aldolase subunit GatY">
    <location>
        <begin position="1"/>
        <end position="284"/>
    </location>
</feature>
<feature type="active site" description="Proton donor" evidence="1">
    <location>
        <position position="82"/>
    </location>
</feature>
<feature type="binding site" evidence="1">
    <location>
        <position position="83"/>
    </location>
    <ligand>
        <name>Zn(2+)</name>
        <dbReference type="ChEBI" id="CHEBI:29105"/>
        <note>catalytic</note>
    </ligand>
</feature>
<feature type="binding site" evidence="1">
    <location>
        <position position="180"/>
    </location>
    <ligand>
        <name>Zn(2+)</name>
        <dbReference type="ChEBI" id="CHEBI:29105"/>
        <note>catalytic</note>
    </ligand>
</feature>
<feature type="binding site" evidence="1">
    <location>
        <position position="181"/>
    </location>
    <ligand>
        <name>dihydroxyacetone phosphate</name>
        <dbReference type="ChEBI" id="CHEBI:57642"/>
    </ligand>
</feature>
<feature type="binding site" evidence="1">
    <location>
        <position position="208"/>
    </location>
    <ligand>
        <name>Zn(2+)</name>
        <dbReference type="ChEBI" id="CHEBI:29105"/>
        <note>catalytic</note>
    </ligand>
</feature>
<feature type="binding site" evidence="1">
    <location>
        <begin position="209"/>
        <end position="211"/>
    </location>
    <ligand>
        <name>dihydroxyacetone phosphate</name>
        <dbReference type="ChEBI" id="CHEBI:57642"/>
    </ligand>
</feature>
<feature type="binding site" evidence="1">
    <location>
        <begin position="230"/>
        <end position="233"/>
    </location>
    <ligand>
        <name>dihydroxyacetone phosphate</name>
        <dbReference type="ChEBI" id="CHEBI:57642"/>
    </ligand>
</feature>
<evidence type="ECO:0000250" key="1"/>
<evidence type="ECO:0000269" key="2">
    <source>
    </source>
</evidence>
<evidence type="ECO:0000269" key="3">
    <source>
    </source>
</evidence>
<evidence type="ECO:0000269" key="4">
    <source>
    </source>
</evidence>
<evidence type="ECO:0000303" key="5">
    <source>
    </source>
</evidence>
<evidence type="ECO:0000305" key="6"/>
<evidence type="ECO:0000305" key="7">
    <source>
    </source>
</evidence>
<evidence type="ECO:0000305" key="8">
    <source>
    </source>
</evidence>
<gene>
    <name type="primary">gatY</name>
    <name type="synonym">yegF</name>
    <name type="ordered locus">b2096</name>
    <name type="ordered locus">JW5343</name>
</gene>